<protein>
    <recommendedName>
        <fullName evidence="1">Probable allantoicase</fullName>
        <ecNumber evidence="1">3.5.3.4</ecNumber>
    </recommendedName>
    <alternativeName>
        <fullName evidence="1">Allantoate amidinohydrolase</fullName>
    </alternativeName>
</protein>
<proteinExistence type="inferred from homology"/>
<comment type="catalytic activity">
    <reaction evidence="1">
        <text>allantoate + H2O = (S)-ureidoglycolate + urea</text>
        <dbReference type="Rhea" id="RHEA:11016"/>
        <dbReference type="ChEBI" id="CHEBI:15377"/>
        <dbReference type="ChEBI" id="CHEBI:16199"/>
        <dbReference type="ChEBI" id="CHEBI:17536"/>
        <dbReference type="ChEBI" id="CHEBI:57296"/>
        <dbReference type="EC" id="3.5.3.4"/>
    </reaction>
</comment>
<comment type="pathway">
    <text evidence="1">Nitrogen metabolism; (S)-allantoin degradation; (S)-ureidoglycolate from allantoate (aminidohydrolase route): step 1/1.</text>
</comment>
<comment type="similarity">
    <text evidence="1">Belongs to the allantoicase family.</text>
</comment>
<dbReference type="EC" id="3.5.3.4" evidence="1"/>
<dbReference type="EMBL" id="FM209186">
    <property type="protein sequence ID" value="CAW28637.1"/>
    <property type="molecule type" value="Genomic_DNA"/>
</dbReference>
<dbReference type="RefSeq" id="WP_004348973.1">
    <property type="nucleotide sequence ID" value="NC_011770.1"/>
</dbReference>
<dbReference type="SMR" id="B7UW33"/>
<dbReference type="KEGG" id="pag:PLES_38951"/>
<dbReference type="HOGENOM" id="CLU_038797_1_2_6"/>
<dbReference type="UniPathway" id="UPA00395">
    <property type="reaction ID" value="UER00654"/>
</dbReference>
<dbReference type="GO" id="GO:0004037">
    <property type="term" value="F:allantoicase activity"/>
    <property type="evidence" value="ECO:0007669"/>
    <property type="project" value="UniProtKB-UniRule"/>
</dbReference>
<dbReference type="GO" id="GO:0000256">
    <property type="term" value="P:allantoin catabolic process"/>
    <property type="evidence" value="ECO:0007669"/>
    <property type="project" value="UniProtKB-UniRule"/>
</dbReference>
<dbReference type="GO" id="GO:0006144">
    <property type="term" value="P:purine nucleobase metabolic process"/>
    <property type="evidence" value="ECO:0007669"/>
    <property type="project" value="UniProtKB-KW"/>
</dbReference>
<dbReference type="FunFam" id="2.60.120.260:FF:000059">
    <property type="entry name" value="Probable allantoicase"/>
    <property type="match status" value="1"/>
</dbReference>
<dbReference type="FunFam" id="2.60.120.260:FF:000090">
    <property type="entry name" value="Probable allantoicase"/>
    <property type="match status" value="1"/>
</dbReference>
<dbReference type="Gene3D" id="2.60.120.260">
    <property type="entry name" value="Galactose-binding domain-like"/>
    <property type="match status" value="2"/>
</dbReference>
<dbReference type="HAMAP" id="MF_00813">
    <property type="entry name" value="Allantoicase"/>
    <property type="match status" value="1"/>
</dbReference>
<dbReference type="InterPro" id="IPR005164">
    <property type="entry name" value="Allantoicase"/>
</dbReference>
<dbReference type="InterPro" id="IPR015908">
    <property type="entry name" value="Allantoicase_dom"/>
</dbReference>
<dbReference type="InterPro" id="IPR008979">
    <property type="entry name" value="Galactose-bd-like_sf"/>
</dbReference>
<dbReference type="NCBIfam" id="TIGR02961">
    <property type="entry name" value="allantoicase"/>
    <property type="match status" value="1"/>
</dbReference>
<dbReference type="PANTHER" id="PTHR12045">
    <property type="entry name" value="ALLANTOICASE"/>
    <property type="match status" value="1"/>
</dbReference>
<dbReference type="PANTHER" id="PTHR12045:SF3">
    <property type="entry name" value="INACTIVE ALLANTOICASE-RELATED"/>
    <property type="match status" value="1"/>
</dbReference>
<dbReference type="Pfam" id="PF03561">
    <property type="entry name" value="Allantoicase"/>
    <property type="match status" value="2"/>
</dbReference>
<dbReference type="PIRSF" id="PIRSF016516">
    <property type="entry name" value="Allantoicase"/>
    <property type="match status" value="1"/>
</dbReference>
<dbReference type="SUPFAM" id="SSF49785">
    <property type="entry name" value="Galactose-binding domain-like"/>
    <property type="match status" value="2"/>
</dbReference>
<sequence>MNAEHAPFRHYLDLADARLGSQVVAVSDEWFAPASRMLQAGEPVWKEGVFDDSGKWMDGWETRRKRFEGHDQAVIRLGVPGVLKGVDIDTRFFTGNHPPAASLDGCFCAEGDPDDSTSWSEVLAAVGLQGDSHHYHPIDDERPWTHLRLNIYPDGGIARLRLYGVPYRDWSNQPPGTALDLAAAVNGGRALACSDQHFGRMGNLLNPGRAINMGDGWETGRRRTPGHDWVIVALGHPGSIEAAVVDTLHFKGNYPESCSIQAAFVEGGNEARIEAQSLFWRELLPAQKLEMHQEHRFERHLNALGPITHVRLNIFPDGGVSRLRLFGRPQLP</sequence>
<reference key="1">
    <citation type="journal article" date="2009" name="Genome Res.">
        <title>Newly introduced genomic prophage islands are critical determinants of in vivo competitiveness in the Liverpool epidemic strain of Pseudomonas aeruginosa.</title>
        <authorList>
            <person name="Winstanley C."/>
            <person name="Langille M.G.I."/>
            <person name="Fothergill J.L."/>
            <person name="Kukavica-Ibrulj I."/>
            <person name="Paradis-Bleau C."/>
            <person name="Sanschagrin F."/>
            <person name="Thomson N.R."/>
            <person name="Winsor G.L."/>
            <person name="Quail M.A."/>
            <person name="Lennard N."/>
            <person name="Bignell A."/>
            <person name="Clarke L."/>
            <person name="Seeger K."/>
            <person name="Saunders D."/>
            <person name="Harris D."/>
            <person name="Parkhill J."/>
            <person name="Hancock R.E.W."/>
            <person name="Brinkman F.S.L."/>
            <person name="Levesque R.C."/>
        </authorList>
    </citation>
    <scope>NUCLEOTIDE SEQUENCE [LARGE SCALE GENOMIC DNA]</scope>
    <source>
        <strain>LESB58</strain>
    </source>
</reference>
<evidence type="ECO:0000255" key="1">
    <source>
        <dbReference type="HAMAP-Rule" id="MF_00813"/>
    </source>
</evidence>
<accession>B7UW33</accession>
<organism>
    <name type="scientific">Pseudomonas aeruginosa (strain LESB58)</name>
    <dbReference type="NCBI Taxonomy" id="557722"/>
    <lineage>
        <taxon>Bacteria</taxon>
        <taxon>Pseudomonadati</taxon>
        <taxon>Pseudomonadota</taxon>
        <taxon>Gammaproteobacteria</taxon>
        <taxon>Pseudomonadales</taxon>
        <taxon>Pseudomonadaceae</taxon>
        <taxon>Pseudomonas</taxon>
    </lineage>
</organism>
<feature type="chain" id="PRO_1000134090" description="Probable allantoicase">
    <location>
        <begin position="1"/>
        <end position="332"/>
    </location>
</feature>
<keyword id="KW-0378">Hydrolase</keyword>
<keyword id="KW-0659">Purine metabolism</keyword>
<name>ALLC_PSEA8</name>
<gene>
    <name evidence="1" type="primary">alc</name>
    <name type="ordered locus">PLES_38951</name>
</gene>